<gene>
    <name evidence="1" type="primary">atpA</name>
</gene>
<organism>
    <name type="scientific">Zea mays</name>
    <name type="common">Maize</name>
    <dbReference type="NCBI Taxonomy" id="4577"/>
    <lineage>
        <taxon>Eukaryota</taxon>
        <taxon>Viridiplantae</taxon>
        <taxon>Streptophyta</taxon>
        <taxon>Embryophyta</taxon>
        <taxon>Tracheophyta</taxon>
        <taxon>Spermatophyta</taxon>
        <taxon>Magnoliopsida</taxon>
        <taxon>Liliopsida</taxon>
        <taxon>Poales</taxon>
        <taxon>Poaceae</taxon>
        <taxon>PACMAD clade</taxon>
        <taxon>Panicoideae</taxon>
        <taxon>Andropogonodae</taxon>
        <taxon>Andropogoneae</taxon>
        <taxon>Tripsacinae</taxon>
        <taxon>Zea</taxon>
    </lineage>
</organism>
<proteinExistence type="evidence at protein level"/>
<geneLocation type="chloroplast"/>
<reference key="1">
    <citation type="journal article" date="1987" name="Genetics">
        <title>Molecular evolution and nucleotide sequences of the maize plastid genes for the alpha subunit of CF1 (atpA) and the proteolipid subunit of CF0 (atpH).</title>
        <authorList>
            <person name="Rodermel S.R."/>
            <person name="Bogorao L."/>
        </authorList>
    </citation>
    <scope>NUCLEOTIDE SEQUENCE [GENOMIC DNA]</scope>
</reference>
<reference key="2">
    <citation type="journal article" date="1995" name="J. Mol. Biol.">
        <title>Complete sequence of the maize chloroplast genome: gene content, hotspots of divergence and fine tuning of genetic information by transcript editing.</title>
        <authorList>
            <person name="Maier R.M."/>
            <person name="Neckermann K."/>
            <person name="Igloi G.L."/>
            <person name="Koessel H."/>
        </authorList>
    </citation>
    <scope>NUCLEOTIDE SEQUENCE [LARGE SCALE GENOMIC DNA]</scope>
    <source>
        <strain>cv. B73</strain>
    </source>
</reference>
<reference key="3">
    <citation type="journal article" date="2012" name="Proteomics">
        <title>Differential phosphorylation of thylakoid proteins in mesophyll and bundle sheath chloroplasts from maize plants grown under low or high light.</title>
        <authorList>
            <person name="Fristedt R."/>
            <person name="Wasilewska W."/>
            <person name="Romanowska E."/>
            <person name="Vener A.V."/>
        </authorList>
    </citation>
    <scope>PROTEIN SEQUENCE OF 378-384</scope>
    <scope>SUBCELLULAR LOCATION</scope>
    <scope>PHOSPHORYLATION AT SER-383</scope>
    <source>
        <strain>cv. Olenka</strain>
        <tissue>Bundle sheath cell</tissue>
        <tissue>Mesophyll cell</tissue>
    </source>
</reference>
<keyword id="KW-0066">ATP synthesis</keyword>
<keyword id="KW-0067">ATP-binding</keyword>
<keyword id="KW-0139">CF(1)</keyword>
<keyword id="KW-0150">Chloroplast</keyword>
<keyword id="KW-0903">Direct protein sequencing</keyword>
<keyword id="KW-0375">Hydrogen ion transport</keyword>
<keyword id="KW-0406">Ion transport</keyword>
<keyword id="KW-0472">Membrane</keyword>
<keyword id="KW-0547">Nucleotide-binding</keyword>
<keyword id="KW-0597">Phosphoprotein</keyword>
<keyword id="KW-0934">Plastid</keyword>
<keyword id="KW-1185">Reference proteome</keyword>
<keyword id="KW-0793">Thylakoid</keyword>
<keyword id="KW-1278">Translocase</keyword>
<keyword id="KW-0813">Transport</keyword>
<accession>P05022</accession>
<sequence>MATLRVDEINKILRERIEQYNRKVGIENIGRVVQVGDGIARIIGLGEIMSGELVEFAEGTRGIALNLESKNVGIVLMGDGLMIQEGSFVKATGRIAQIPVSEAYLGRVINALAKPIDGRGEIVASESRLIESPAPGIISRRSVYEPLQTGLIAIDSMIPIGRGQRELIIGDRQTGKTAVATDTILNQKGQDVICVYVAIGQRASSVAQVVTTFHEEGAMEYTIVVAEMADSPATLQYLAPYTGAALAEYFMYRERHTLIIYDDLSKQAQAYRQMSLLLRRPPGREAYLGDVFYLHSRLLERAAKLNSLLGEGSMTALPIVETQSGDVSAYIPTNVISITDGQIFLSADLFNAGIRPAINVGISVSRVGSAAQIKAMKQVAGKSKLELAQFAELQAFAQFASALDKTSQNQLARGRRLRELLKQSQSNPLPVEEQVATIYTGTRGYLDSLEIEQVKKFLDELRKHLKDTKPQFQEIISSSKTFTEQAETLLKEAIQEQLERFSLQEQT</sequence>
<dbReference type="EC" id="7.1.2.2" evidence="1"/>
<dbReference type="EMBL" id="X05255">
    <property type="protein sequence ID" value="CAA28876.1"/>
    <property type="molecule type" value="Genomic_DNA"/>
</dbReference>
<dbReference type="EMBL" id="M27557">
    <property type="protein sequence ID" value="AAA84474.1"/>
    <property type="molecule type" value="Genomic_DNA"/>
</dbReference>
<dbReference type="EMBL" id="X86563">
    <property type="protein sequence ID" value="CAA60283.1"/>
    <property type="molecule type" value="Genomic_DNA"/>
</dbReference>
<dbReference type="PIR" id="S06291">
    <property type="entry name" value="PWZMA"/>
</dbReference>
<dbReference type="RefSeq" id="NP_043022.1">
    <property type="nucleotide sequence ID" value="NC_001666.2"/>
</dbReference>
<dbReference type="SMR" id="P05022"/>
<dbReference type="FunCoup" id="P05022">
    <property type="interactions" value="409"/>
</dbReference>
<dbReference type="STRING" id="4577.P05022"/>
<dbReference type="iPTMnet" id="P05022"/>
<dbReference type="GeneID" id="845169"/>
<dbReference type="KEGG" id="zma:845169"/>
<dbReference type="MaizeGDB" id="69206"/>
<dbReference type="InParanoid" id="P05022"/>
<dbReference type="OrthoDB" id="751331at2759"/>
<dbReference type="Proteomes" id="UP000007305">
    <property type="component" value="Chloroplast"/>
</dbReference>
<dbReference type="ExpressionAtlas" id="P05022">
    <property type="expression patterns" value="baseline"/>
</dbReference>
<dbReference type="GO" id="GO:0009535">
    <property type="term" value="C:chloroplast thylakoid membrane"/>
    <property type="evidence" value="ECO:0007669"/>
    <property type="project" value="UniProtKB-SubCell"/>
</dbReference>
<dbReference type="GO" id="GO:0045259">
    <property type="term" value="C:proton-transporting ATP synthase complex"/>
    <property type="evidence" value="ECO:0007669"/>
    <property type="project" value="UniProtKB-KW"/>
</dbReference>
<dbReference type="GO" id="GO:0043531">
    <property type="term" value="F:ADP binding"/>
    <property type="evidence" value="ECO:0000318"/>
    <property type="project" value="GO_Central"/>
</dbReference>
<dbReference type="GO" id="GO:0005524">
    <property type="term" value="F:ATP binding"/>
    <property type="evidence" value="ECO:0000318"/>
    <property type="project" value="GO_Central"/>
</dbReference>
<dbReference type="GO" id="GO:0046933">
    <property type="term" value="F:proton-transporting ATP synthase activity, rotational mechanism"/>
    <property type="evidence" value="ECO:0007669"/>
    <property type="project" value="UniProtKB-UniRule"/>
</dbReference>
<dbReference type="GO" id="GO:0015986">
    <property type="term" value="P:proton motive force-driven ATP synthesis"/>
    <property type="evidence" value="ECO:0000318"/>
    <property type="project" value="GO_Central"/>
</dbReference>
<dbReference type="CDD" id="cd18113">
    <property type="entry name" value="ATP-synt_F1_alpha_C"/>
    <property type="match status" value="1"/>
</dbReference>
<dbReference type="CDD" id="cd18116">
    <property type="entry name" value="ATP-synt_F1_alpha_N"/>
    <property type="match status" value="1"/>
</dbReference>
<dbReference type="CDD" id="cd01132">
    <property type="entry name" value="F1-ATPase_alpha_CD"/>
    <property type="match status" value="1"/>
</dbReference>
<dbReference type="FunFam" id="1.20.150.20:FF:000001">
    <property type="entry name" value="ATP synthase subunit alpha"/>
    <property type="match status" value="1"/>
</dbReference>
<dbReference type="FunFam" id="2.40.30.20:FF:000001">
    <property type="entry name" value="ATP synthase subunit alpha"/>
    <property type="match status" value="1"/>
</dbReference>
<dbReference type="FunFam" id="3.40.50.300:FF:000002">
    <property type="entry name" value="ATP synthase subunit alpha"/>
    <property type="match status" value="1"/>
</dbReference>
<dbReference type="Gene3D" id="2.40.30.20">
    <property type="match status" value="1"/>
</dbReference>
<dbReference type="Gene3D" id="1.20.150.20">
    <property type="entry name" value="ATP synthase alpha/beta chain, C-terminal domain"/>
    <property type="match status" value="1"/>
</dbReference>
<dbReference type="Gene3D" id="3.40.50.300">
    <property type="entry name" value="P-loop containing nucleotide triphosphate hydrolases"/>
    <property type="match status" value="1"/>
</dbReference>
<dbReference type="HAMAP" id="MF_01346">
    <property type="entry name" value="ATP_synth_alpha_bact"/>
    <property type="match status" value="1"/>
</dbReference>
<dbReference type="InterPro" id="IPR023366">
    <property type="entry name" value="ATP_synth_asu-like_sf"/>
</dbReference>
<dbReference type="InterPro" id="IPR000793">
    <property type="entry name" value="ATP_synth_asu_C"/>
</dbReference>
<dbReference type="InterPro" id="IPR038376">
    <property type="entry name" value="ATP_synth_asu_C_sf"/>
</dbReference>
<dbReference type="InterPro" id="IPR033732">
    <property type="entry name" value="ATP_synth_F1_a_nt-bd_dom"/>
</dbReference>
<dbReference type="InterPro" id="IPR005294">
    <property type="entry name" value="ATP_synth_F1_asu"/>
</dbReference>
<dbReference type="InterPro" id="IPR020003">
    <property type="entry name" value="ATPase_a/bsu_AS"/>
</dbReference>
<dbReference type="InterPro" id="IPR004100">
    <property type="entry name" value="ATPase_F1/V1/A1_a/bsu_N"/>
</dbReference>
<dbReference type="InterPro" id="IPR036121">
    <property type="entry name" value="ATPase_F1/V1/A1_a/bsu_N_sf"/>
</dbReference>
<dbReference type="InterPro" id="IPR000194">
    <property type="entry name" value="ATPase_F1/V1/A1_a/bsu_nucl-bd"/>
</dbReference>
<dbReference type="InterPro" id="IPR027417">
    <property type="entry name" value="P-loop_NTPase"/>
</dbReference>
<dbReference type="NCBIfam" id="TIGR00962">
    <property type="entry name" value="atpA"/>
    <property type="match status" value="1"/>
</dbReference>
<dbReference type="NCBIfam" id="NF009884">
    <property type="entry name" value="PRK13343.1"/>
    <property type="match status" value="1"/>
</dbReference>
<dbReference type="PANTHER" id="PTHR48082:SF6">
    <property type="entry name" value="ATP SYNTHASE SUBUNIT ALPHA, CHLOROPLASTIC"/>
    <property type="match status" value="1"/>
</dbReference>
<dbReference type="PANTHER" id="PTHR48082">
    <property type="entry name" value="ATP SYNTHASE SUBUNIT ALPHA, MITOCHONDRIAL"/>
    <property type="match status" value="1"/>
</dbReference>
<dbReference type="Pfam" id="PF00006">
    <property type="entry name" value="ATP-synt_ab"/>
    <property type="match status" value="1"/>
</dbReference>
<dbReference type="Pfam" id="PF00306">
    <property type="entry name" value="ATP-synt_ab_C"/>
    <property type="match status" value="1"/>
</dbReference>
<dbReference type="Pfam" id="PF02874">
    <property type="entry name" value="ATP-synt_ab_N"/>
    <property type="match status" value="1"/>
</dbReference>
<dbReference type="PIRSF" id="PIRSF039088">
    <property type="entry name" value="F_ATPase_subunit_alpha"/>
    <property type="match status" value="1"/>
</dbReference>
<dbReference type="SUPFAM" id="SSF47917">
    <property type="entry name" value="C-terminal domain of alpha and beta subunits of F1 ATP synthase"/>
    <property type="match status" value="1"/>
</dbReference>
<dbReference type="SUPFAM" id="SSF50615">
    <property type="entry name" value="N-terminal domain of alpha and beta subunits of F1 ATP synthase"/>
    <property type="match status" value="1"/>
</dbReference>
<dbReference type="SUPFAM" id="SSF52540">
    <property type="entry name" value="P-loop containing nucleoside triphosphate hydrolases"/>
    <property type="match status" value="1"/>
</dbReference>
<dbReference type="PROSITE" id="PS00152">
    <property type="entry name" value="ATPASE_ALPHA_BETA"/>
    <property type="match status" value="1"/>
</dbReference>
<protein>
    <recommendedName>
        <fullName evidence="1">ATP synthase subunit alpha, chloroplastic</fullName>
        <ecNumber evidence="1">7.1.2.2</ecNumber>
    </recommendedName>
    <alternativeName>
        <fullName evidence="1">ATP synthase F1 sector subunit alpha</fullName>
    </alternativeName>
    <alternativeName>
        <fullName evidence="1">F-ATPase subunit alpha</fullName>
    </alternativeName>
</protein>
<evidence type="ECO:0000255" key="1">
    <source>
        <dbReference type="HAMAP-Rule" id="MF_01346"/>
    </source>
</evidence>
<evidence type="ECO:0000269" key="2">
    <source>
    </source>
</evidence>
<name>ATPA_MAIZE</name>
<comment type="function">
    <text evidence="1">Produces ATP from ADP in the presence of a proton gradient across the membrane. The alpha chain is a regulatory subunit.</text>
</comment>
<comment type="catalytic activity">
    <reaction evidence="1">
        <text>ATP + H2O + 4 H(+)(in) = ADP + phosphate + 5 H(+)(out)</text>
        <dbReference type="Rhea" id="RHEA:57720"/>
        <dbReference type="ChEBI" id="CHEBI:15377"/>
        <dbReference type="ChEBI" id="CHEBI:15378"/>
        <dbReference type="ChEBI" id="CHEBI:30616"/>
        <dbReference type="ChEBI" id="CHEBI:43474"/>
        <dbReference type="ChEBI" id="CHEBI:456216"/>
        <dbReference type="EC" id="7.1.2.2"/>
    </reaction>
</comment>
<comment type="subunit">
    <text evidence="1">F-type ATPases have 2 components, CF(1) - the catalytic core - and CF(0) - the membrane proton channel. CF(1) has five subunits: alpha(3), beta(3), gamma(1), delta(1), epsilon(1). CF(0) has four main subunits: a, b, b' and c.</text>
</comment>
<comment type="subcellular location">
    <subcellularLocation>
        <location evidence="1 2">Plastid</location>
        <location evidence="1 2">Chloroplast thylakoid membrane</location>
        <topology evidence="1">Peripheral membrane protein</topology>
    </subcellularLocation>
</comment>
<comment type="PTM">
    <text evidence="2">Only phosphorylated in mesophyll cells, and only when cells are grown under high rather than low light regimes (70 vs 900 umol photons/m-2/s).</text>
</comment>
<comment type="similarity">
    <text evidence="1">Belongs to the ATPase alpha/beta chains family.</text>
</comment>
<feature type="chain" id="PRO_0000144379" description="ATP synthase subunit alpha, chloroplastic">
    <location>
        <begin position="1"/>
        <end position="507"/>
    </location>
</feature>
<feature type="binding site" evidence="1">
    <location>
        <begin position="170"/>
        <end position="177"/>
    </location>
    <ligand>
        <name>ATP</name>
        <dbReference type="ChEBI" id="CHEBI:30616"/>
    </ligand>
</feature>
<feature type="site" description="Required for activity" evidence="1">
    <location>
        <position position="363"/>
    </location>
</feature>
<feature type="modified residue" description="Phosphoserine" evidence="2">
    <location>
        <position position="383"/>
    </location>
</feature>